<sequence length="452" mass="51368">MEKQYLTVTALTRYIKTKIEYDPHLQSVWLKGEISNFKNHSRGHMYFTLKDENARIAAVMFAGHNRNIKFRPENGMKVLVKGKISVYEASGSYQIYIQDMQPDGVGNLHLAYEQLKVRLEEEGLFSQVYKKTIPPYAKTIGVITSPTGAAIRDIITTIKRRYPIGNVIVFPVLVQGESAAPSIVQAIRTANEMEGIDVLIVGRGGGSIEELWAFNEEMVARAIFKSEIPIISAVGHETDFTIADFVADLRAPTPTAAAELAAPNIIELQEKVLQRTLRLQRAMRELVHKKEEKLQVLQKSYAFRYPRQVYEQKEEQLDRALEQLVLAKERYIDKKVNQLKQLSFYLEKHHPSQKIMQTKVAVETLQKQLQREMQTLLQTKEFAFVRAAQKLEALSPLKVMMRGYGLVYDEEKQVLKSVKDVSLGDAVSVQLQDGILDCSVSGIEERELNNGK</sequence>
<accession>B7HNU3</accession>
<organism>
    <name type="scientific">Bacillus cereus (strain AH187)</name>
    <dbReference type="NCBI Taxonomy" id="405534"/>
    <lineage>
        <taxon>Bacteria</taxon>
        <taxon>Bacillati</taxon>
        <taxon>Bacillota</taxon>
        <taxon>Bacilli</taxon>
        <taxon>Bacillales</taxon>
        <taxon>Bacillaceae</taxon>
        <taxon>Bacillus</taxon>
        <taxon>Bacillus cereus group</taxon>
    </lineage>
</organism>
<comment type="function">
    <text evidence="1">Bidirectionally degrades single-stranded DNA into large acid-insoluble oligonucleotides, which are then degraded further into small acid-soluble oligonucleotides.</text>
</comment>
<comment type="catalytic activity">
    <reaction evidence="1">
        <text>Exonucleolytic cleavage in either 5'- to 3'- or 3'- to 5'-direction to yield nucleoside 5'-phosphates.</text>
        <dbReference type="EC" id="3.1.11.6"/>
    </reaction>
</comment>
<comment type="subunit">
    <text evidence="1">Heterooligomer composed of large and small subunits.</text>
</comment>
<comment type="subcellular location">
    <subcellularLocation>
        <location evidence="1">Cytoplasm</location>
    </subcellularLocation>
</comment>
<comment type="similarity">
    <text evidence="1">Belongs to the XseA family.</text>
</comment>
<evidence type="ECO:0000255" key="1">
    <source>
        <dbReference type="HAMAP-Rule" id="MF_00378"/>
    </source>
</evidence>
<dbReference type="EC" id="3.1.11.6" evidence="1"/>
<dbReference type="EMBL" id="CP001177">
    <property type="protein sequence ID" value="ACJ80682.1"/>
    <property type="molecule type" value="Genomic_DNA"/>
</dbReference>
<dbReference type="SMR" id="B7HNU3"/>
<dbReference type="KEGG" id="bcr:BCAH187_A4310"/>
<dbReference type="HOGENOM" id="CLU_023625_3_1_9"/>
<dbReference type="Proteomes" id="UP000002214">
    <property type="component" value="Chromosome"/>
</dbReference>
<dbReference type="GO" id="GO:0005737">
    <property type="term" value="C:cytoplasm"/>
    <property type="evidence" value="ECO:0007669"/>
    <property type="project" value="UniProtKB-SubCell"/>
</dbReference>
<dbReference type="GO" id="GO:0009318">
    <property type="term" value="C:exodeoxyribonuclease VII complex"/>
    <property type="evidence" value="ECO:0007669"/>
    <property type="project" value="InterPro"/>
</dbReference>
<dbReference type="GO" id="GO:0008855">
    <property type="term" value="F:exodeoxyribonuclease VII activity"/>
    <property type="evidence" value="ECO:0007669"/>
    <property type="project" value="UniProtKB-UniRule"/>
</dbReference>
<dbReference type="GO" id="GO:0003676">
    <property type="term" value="F:nucleic acid binding"/>
    <property type="evidence" value="ECO:0007669"/>
    <property type="project" value="InterPro"/>
</dbReference>
<dbReference type="GO" id="GO:0006308">
    <property type="term" value="P:DNA catabolic process"/>
    <property type="evidence" value="ECO:0007669"/>
    <property type="project" value="UniProtKB-UniRule"/>
</dbReference>
<dbReference type="CDD" id="cd04489">
    <property type="entry name" value="ExoVII_LU_OBF"/>
    <property type="match status" value="1"/>
</dbReference>
<dbReference type="HAMAP" id="MF_00378">
    <property type="entry name" value="Exonuc_7_L"/>
    <property type="match status" value="1"/>
</dbReference>
<dbReference type="InterPro" id="IPR003753">
    <property type="entry name" value="Exonuc_VII_L"/>
</dbReference>
<dbReference type="InterPro" id="IPR020579">
    <property type="entry name" value="Exonuc_VII_lsu_C"/>
</dbReference>
<dbReference type="InterPro" id="IPR025824">
    <property type="entry name" value="OB-fold_nuc-bd_dom"/>
</dbReference>
<dbReference type="NCBIfam" id="TIGR00237">
    <property type="entry name" value="xseA"/>
    <property type="match status" value="1"/>
</dbReference>
<dbReference type="PANTHER" id="PTHR30008">
    <property type="entry name" value="EXODEOXYRIBONUCLEASE 7 LARGE SUBUNIT"/>
    <property type="match status" value="1"/>
</dbReference>
<dbReference type="PANTHER" id="PTHR30008:SF0">
    <property type="entry name" value="EXODEOXYRIBONUCLEASE 7 LARGE SUBUNIT"/>
    <property type="match status" value="1"/>
</dbReference>
<dbReference type="Pfam" id="PF02601">
    <property type="entry name" value="Exonuc_VII_L"/>
    <property type="match status" value="1"/>
</dbReference>
<dbReference type="Pfam" id="PF13742">
    <property type="entry name" value="tRNA_anti_2"/>
    <property type="match status" value="1"/>
</dbReference>
<feature type="chain" id="PRO_1000122041" description="Exodeoxyribonuclease 7 large subunit">
    <location>
        <begin position="1"/>
        <end position="452"/>
    </location>
</feature>
<protein>
    <recommendedName>
        <fullName evidence="1">Exodeoxyribonuclease 7 large subunit</fullName>
        <ecNumber evidence="1">3.1.11.6</ecNumber>
    </recommendedName>
    <alternativeName>
        <fullName evidence="1">Exodeoxyribonuclease VII large subunit</fullName>
        <shortName evidence="1">Exonuclease VII large subunit</shortName>
    </alternativeName>
</protein>
<proteinExistence type="inferred from homology"/>
<name>EX7L_BACC7</name>
<reference key="1">
    <citation type="submission" date="2008-10" db="EMBL/GenBank/DDBJ databases">
        <title>Genome sequence of Bacillus cereus AH187.</title>
        <authorList>
            <person name="Dodson R.J."/>
            <person name="Durkin A.S."/>
            <person name="Rosovitz M.J."/>
            <person name="Rasko D.A."/>
            <person name="Kolsto A.B."/>
            <person name="Okstad O.A."/>
            <person name="Ravel J."/>
            <person name="Sutton G."/>
        </authorList>
    </citation>
    <scope>NUCLEOTIDE SEQUENCE [LARGE SCALE GENOMIC DNA]</scope>
    <source>
        <strain>AH187</strain>
    </source>
</reference>
<keyword id="KW-0963">Cytoplasm</keyword>
<keyword id="KW-0269">Exonuclease</keyword>
<keyword id="KW-0378">Hydrolase</keyword>
<keyword id="KW-0540">Nuclease</keyword>
<gene>
    <name evidence="1" type="primary">xseA</name>
    <name type="ordered locus">BCAH187_A4310</name>
</gene>